<gene>
    <name evidence="1" type="primary">bioD</name>
    <name type="ordered locus">lpp1431</name>
</gene>
<accession>Q5X589</accession>
<protein>
    <recommendedName>
        <fullName evidence="1">ATP-dependent dethiobiotin synthetase BioD</fullName>
        <ecNumber evidence="1">6.3.3.3</ecNumber>
    </recommendedName>
    <alternativeName>
        <fullName evidence="1">DTB synthetase</fullName>
        <shortName evidence="1">DTBS</shortName>
    </alternativeName>
    <alternativeName>
        <fullName evidence="1">Dethiobiotin synthase</fullName>
    </alternativeName>
</protein>
<sequence>MKRYFVTGTDTDCGKTFVTNQLVNYFSNSAAIKPIASGCEYSENQLVNSDALLHQQQNHLSLEIINPWRFRLPVSPHLSAREDGASIDVHKVADYCLNLQLNDIKKLFIEGAGGLMVPLNEQDTWLDFLKLTRIPVILVVGMKLGCINHTLLTQEVLEINKIKCQGWIANCLDQDMLMLDENINTLEAKLKYPLLARTNYGGKISDICLSSL</sequence>
<dbReference type="EC" id="6.3.3.3" evidence="1"/>
<dbReference type="EMBL" id="CR628336">
    <property type="protein sequence ID" value="CAH12582.1"/>
    <property type="molecule type" value="Genomic_DNA"/>
</dbReference>
<dbReference type="RefSeq" id="WP_011213759.1">
    <property type="nucleotide sequence ID" value="NC_006368.1"/>
</dbReference>
<dbReference type="SMR" id="Q5X589"/>
<dbReference type="KEGG" id="lpp:lpp1431"/>
<dbReference type="LegioList" id="lpp1431"/>
<dbReference type="HOGENOM" id="CLU_072551_0_0_6"/>
<dbReference type="UniPathway" id="UPA00078">
    <property type="reaction ID" value="UER00161"/>
</dbReference>
<dbReference type="GO" id="GO:0005829">
    <property type="term" value="C:cytosol"/>
    <property type="evidence" value="ECO:0007669"/>
    <property type="project" value="TreeGrafter"/>
</dbReference>
<dbReference type="GO" id="GO:0005524">
    <property type="term" value="F:ATP binding"/>
    <property type="evidence" value="ECO:0007669"/>
    <property type="project" value="UniProtKB-UniRule"/>
</dbReference>
<dbReference type="GO" id="GO:0004141">
    <property type="term" value="F:dethiobiotin synthase activity"/>
    <property type="evidence" value="ECO:0007669"/>
    <property type="project" value="UniProtKB-UniRule"/>
</dbReference>
<dbReference type="GO" id="GO:0000287">
    <property type="term" value="F:magnesium ion binding"/>
    <property type="evidence" value="ECO:0007669"/>
    <property type="project" value="UniProtKB-UniRule"/>
</dbReference>
<dbReference type="GO" id="GO:0009102">
    <property type="term" value="P:biotin biosynthetic process"/>
    <property type="evidence" value="ECO:0007669"/>
    <property type="project" value="UniProtKB-UniRule"/>
</dbReference>
<dbReference type="CDD" id="cd03109">
    <property type="entry name" value="DTBS"/>
    <property type="match status" value="1"/>
</dbReference>
<dbReference type="FunFam" id="3.40.50.300:FF:000292">
    <property type="entry name" value="ATP-dependent dethiobiotin synthetase BioD"/>
    <property type="match status" value="1"/>
</dbReference>
<dbReference type="Gene3D" id="3.40.50.300">
    <property type="entry name" value="P-loop containing nucleotide triphosphate hydrolases"/>
    <property type="match status" value="1"/>
</dbReference>
<dbReference type="HAMAP" id="MF_00336">
    <property type="entry name" value="BioD"/>
    <property type="match status" value="1"/>
</dbReference>
<dbReference type="InterPro" id="IPR004472">
    <property type="entry name" value="DTB_synth_BioD"/>
</dbReference>
<dbReference type="InterPro" id="IPR027417">
    <property type="entry name" value="P-loop_NTPase"/>
</dbReference>
<dbReference type="NCBIfam" id="TIGR00347">
    <property type="entry name" value="bioD"/>
    <property type="match status" value="1"/>
</dbReference>
<dbReference type="PANTHER" id="PTHR43210">
    <property type="entry name" value="DETHIOBIOTIN SYNTHETASE"/>
    <property type="match status" value="1"/>
</dbReference>
<dbReference type="PANTHER" id="PTHR43210:SF5">
    <property type="entry name" value="DETHIOBIOTIN SYNTHETASE"/>
    <property type="match status" value="1"/>
</dbReference>
<dbReference type="Pfam" id="PF13500">
    <property type="entry name" value="AAA_26"/>
    <property type="match status" value="1"/>
</dbReference>
<dbReference type="PIRSF" id="PIRSF006755">
    <property type="entry name" value="DTB_synth"/>
    <property type="match status" value="1"/>
</dbReference>
<dbReference type="SUPFAM" id="SSF52540">
    <property type="entry name" value="P-loop containing nucleoside triphosphate hydrolases"/>
    <property type="match status" value="1"/>
</dbReference>
<organism>
    <name type="scientific">Legionella pneumophila (strain Paris)</name>
    <dbReference type="NCBI Taxonomy" id="297246"/>
    <lineage>
        <taxon>Bacteria</taxon>
        <taxon>Pseudomonadati</taxon>
        <taxon>Pseudomonadota</taxon>
        <taxon>Gammaproteobacteria</taxon>
        <taxon>Legionellales</taxon>
        <taxon>Legionellaceae</taxon>
        <taxon>Legionella</taxon>
    </lineage>
</organism>
<feature type="chain" id="PRO_0000302517" description="ATP-dependent dethiobiotin synthetase BioD">
    <location>
        <begin position="1"/>
        <end position="212"/>
    </location>
</feature>
<feature type="active site" evidence="1">
    <location>
        <position position="33"/>
    </location>
</feature>
<feature type="binding site" evidence="1">
    <location>
        <begin position="12"/>
        <end position="17"/>
    </location>
    <ligand>
        <name>ATP</name>
        <dbReference type="ChEBI" id="CHEBI:30616"/>
    </ligand>
</feature>
<feature type="binding site" evidence="1">
    <location>
        <position position="16"/>
    </location>
    <ligand>
        <name>Mg(2+)</name>
        <dbReference type="ChEBI" id="CHEBI:18420"/>
    </ligand>
</feature>
<feature type="binding site" evidence="1">
    <location>
        <position position="37"/>
    </location>
    <ligand>
        <name>substrate</name>
    </ligand>
</feature>
<feature type="binding site" evidence="1">
    <location>
        <position position="50"/>
    </location>
    <ligand>
        <name>ATP</name>
        <dbReference type="ChEBI" id="CHEBI:30616"/>
    </ligand>
</feature>
<feature type="binding site" evidence="1">
    <location>
        <position position="50"/>
    </location>
    <ligand>
        <name>Mg(2+)</name>
        <dbReference type="ChEBI" id="CHEBI:18420"/>
    </ligand>
</feature>
<feature type="binding site" evidence="1">
    <location>
        <begin position="110"/>
        <end position="113"/>
    </location>
    <ligand>
        <name>ATP</name>
        <dbReference type="ChEBI" id="CHEBI:30616"/>
    </ligand>
</feature>
<feature type="binding site" evidence="1">
    <location>
        <position position="110"/>
    </location>
    <ligand>
        <name>Mg(2+)</name>
        <dbReference type="ChEBI" id="CHEBI:18420"/>
    </ligand>
</feature>
<feature type="binding site" evidence="1">
    <location>
        <begin position="170"/>
        <end position="171"/>
    </location>
    <ligand>
        <name>ATP</name>
        <dbReference type="ChEBI" id="CHEBI:30616"/>
    </ligand>
</feature>
<reference key="1">
    <citation type="journal article" date="2004" name="Nat. Genet.">
        <title>Evidence in the Legionella pneumophila genome for exploitation of host cell functions and high genome plasticity.</title>
        <authorList>
            <person name="Cazalet C."/>
            <person name="Rusniok C."/>
            <person name="Brueggemann H."/>
            <person name="Zidane N."/>
            <person name="Magnier A."/>
            <person name="Ma L."/>
            <person name="Tichit M."/>
            <person name="Jarraud S."/>
            <person name="Bouchier C."/>
            <person name="Vandenesch F."/>
            <person name="Kunst F."/>
            <person name="Etienne J."/>
            <person name="Glaser P."/>
            <person name="Buchrieser C."/>
        </authorList>
    </citation>
    <scope>NUCLEOTIDE SEQUENCE [LARGE SCALE GENOMIC DNA]</scope>
    <source>
        <strain>Paris</strain>
    </source>
</reference>
<proteinExistence type="inferred from homology"/>
<keyword id="KW-0067">ATP-binding</keyword>
<keyword id="KW-0093">Biotin biosynthesis</keyword>
<keyword id="KW-0963">Cytoplasm</keyword>
<keyword id="KW-0436">Ligase</keyword>
<keyword id="KW-0460">Magnesium</keyword>
<keyword id="KW-0479">Metal-binding</keyword>
<keyword id="KW-0547">Nucleotide-binding</keyword>
<comment type="function">
    <text evidence="1">Catalyzes a mechanistically unusual reaction, the ATP-dependent insertion of CO2 between the N7 and N8 nitrogen atoms of 7,8-diaminopelargonic acid (DAPA, also called 7,8-diammoniononanoate) to form a ureido ring.</text>
</comment>
<comment type="catalytic activity">
    <reaction evidence="1">
        <text>(7R,8S)-7,8-diammoniononanoate + CO2 + ATP = (4R,5S)-dethiobiotin + ADP + phosphate + 3 H(+)</text>
        <dbReference type="Rhea" id="RHEA:15805"/>
        <dbReference type="ChEBI" id="CHEBI:15378"/>
        <dbReference type="ChEBI" id="CHEBI:16526"/>
        <dbReference type="ChEBI" id="CHEBI:30616"/>
        <dbReference type="ChEBI" id="CHEBI:43474"/>
        <dbReference type="ChEBI" id="CHEBI:149469"/>
        <dbReference type="ChEBI" id="CHEBI:149473"/>
        <dbReference type="ChEBI" id="CHEBI:456216"/>
        <dbReference type="EC" id="6.3.3.3"/>
    </reaction>
</comment>
<comment type="cofactor">
    <cofactor evidence="1">
        <name>Mg(2+)</name>
        <dbReference type="ChEBI" id="CHEBI:18420"/>
    </cofactor>
</comment>
<comment type="pathway">
    <text evidence="1">Cofactor biosynthesis; biotin biosynthesis; biotin from 7,8-diaminononanoate: step 1/2.</text>
</comment>
<comment type="subunit">
    <text evidence="1">Homodimer.</text>
</comment>
<comment type="subcellular location">
    <subcellularLocation>
        <location evidence="1">Cytoplasm</location>
    </subcellularLocation>
</comment>
<comment type="similarity">
    <text evidence="1">Belongs to the dethiobiotin synthetase family.</text>
</comment>
<name>BIOD_LEGPA</name>
<evidence type="ECO:0000255" key="1">
    <source>
        <dbReference type="HAMAP-Rule" id="MF_00336"/>
    </source>
</evidence>